<keyword id="KW-0025">Alternative splicing</keyword>
<keyword id="KW-1262">Eukaryotic host gene expression shutoff by virus</keyword>
<keyword id="KW-1035">Host cytoplasm</keyword>
<keyword id="KW-1190">Host gene expression shutoff by virus</keyword>
<keyword id="KW-1192">Host mRNA suppression by virus</keyword>
<keyword id="KW-1048">Host nucleus</keyword>
<keyword id="KW-0945">Host-virus interaction</keyword>
<keyword id="KW-1090">Inhibition of host innate immune response by virus</keyword>
<keyword id="KW-1114">Inhibition of host interferon signaling pathway by virus</keyword>
<keyword id="KW-1102">Inhibition of host PKR by virus</keyword>
<keyword id="KW-1103">Inhibition of host pre-mRNA processing by virus</keyword>
<keyword id="KW-1088">Inhibition of host RIG-I by virus</keyword>
<keyword id="KW-1113">Inhibition of host RLR pathway by virus</keyword>
<keyword id="KW-0922">Interferon antiviral system evasion</keyword>
<keyword id="KW-0694">RNA-binding</keyword>
<keyword id="KW-0832">Ubl conjugation</keyword>
<keyword id="KW-0899">Viral immunoevasion</keyword>
<dbReference type="EMBL" id="D30670">
    <property type="protein sequence ID" value="BAA06342.1"/>
    <property type="molecule type" value="Genomic_RNA"/>
</dbReference>
<dbReference type="SMR" id="Q67253"/>
<dbReference type="GO" id="GO:0030430">
    <property type="term" value="C:host cell cytoplasm"/>
    <property type="evidence" value="ECO:0007669"/>
    <property type="project" value="UniProtKB-SubCell"/>
</dbReference>
<dbReference type="GO" id="GO:0042025">
    <property type="term" value="C:host cell nucleus"/>
    <property type="evidence" value="ECO:0007669"/>
    <property type="project" value="UniProtKB-SubCell"/>
</dbReference>
<dbReference type="GO" id="GO:0030291">
    <property type="term" value="F:protein serine/threonine kinase inhibitor activity"/>
    <property type="evidence" value="ECO:0007669"/>
    <property type="project" value="UniProtKB-KW"/>
</dbReference>
<dbReference type="GO" id="GO:0003723">
    <property type="term" value="F:RNA binding"/>
    <property type="evidence" value="ECO:0007669"/>
    <property type="project" value="UniProtKB-KW"/>
</dbReference>
<dbReference type="GO" id="GO:0039540">
    <property type="term" value="P:symbiont-mediated suppression of host cytoplasmic pattern recognition receptor signaling pathway via inhibition of RIG-I activity"/>
    <property type="evidence" value="ECO:0007669"/>
    <property type="project" value="UniProtKB-KW"/>
</dbReference>
<dbReference type="GO" id="GO:0039657">
    <property type="term" value="P:symbiont-mediated suppression of host gene expression"/>
    <property type="evidence" value="ECO:0007669"/>
    <property type="project" value="UniProtKB-KW"/>
</dbReference>
<dbReference type="GO" id="GO:0039524">
    <property type="term" value="P:symbiont-mediated suppression of host mRNA processing"/>
    <property type="evidence" value="ECO:0007669"/>
    <property type="project" value="UniProtKB-KW"/>
</dbReference>
<dbReference type="GO" id="GO:0039580">
    <property type="term" value="P:symbiont-mediated suppression of host PKR/eIFalpha signaling"/>
    <property type="evidence" value="ECO:0007669"/>
    <property type="project" value="UniProtKB-KW"/>
</dbReference>
<dbReference type="GO" id="GO:0039502">
    <property type="term" value="P:symbiont-mediated suppression of host type I interferon-mediated signaling pathway"/>
    <property type="evidence" value="ECO:0007669"/>
    <property type="project" value="UniProtKB-KW"/>
</dbReference>
<dbReference type="FunFam" id="1.10.287.10:FF:000001">
    <property type="entry name" value="Non-structural protein 1"/>
    <property type="match status" value="1"/>
</dbReference>
<dbReference type="FunFam" id="3.30.420.330:FF:000001">
    <property type="entry name" value="Non-structural protein 1"/>
    <property type="match status" value="1"/>
</dbReference>
<dbReference type="Gene3D" id="3.30.420.330">
    <property type="entry name" value="Influenza virus non-structural protein, effector domain"/>
    <property type="match status" value="1"/>
</dbReference>
<dbReference type="Gene3D" id="1.10.287.10">
    <property type="entry name" value="S15/NS1, RNA-binding"/>
    <property type="match status" value="1"/>
</dbReference>
<dbReference type="HAMAP" id="MF_04066">
    <property type="entry name" value="INFV_NS1"/>
    <property type="match status" value="1"/>
</dbReference>
<dbReference type="InterPro" id="IPR004208">
    <property type="entry name" value="NS1"/>
</dbReference>
<dbReference type="InterPro" id="IPR000256">
    <property type="entry name" value="NS1A"/>
</dbReference>
<dbReference type="InterPro" id="IPR038064">
    <property type="entry name" value="NS1A_effect_dom-like_sf"/>
</dbReference>
<dbReference type="InterPro" id="IPR009068">
    <property type="entry name" value="uS15_NS1_RNA-bd_sf"/>
</dbReference>
<dbReference type="Pfam" id="PF00600">
    <property type="entry name" value="Flu_NS1"/>
    <property type="match status" value="1"/>
</dbReference>
<dbReference type="SUPFAM" id="SSF143021">
    <property type="entry name" value="Ns1 effector domain-like"/>
    <property type="match status" value="1"/>
</dbReference>
<dbReference type="SUPFAM" id="SSF47060">
    <property type="entry name" value="S15/NS1 RNA-binding domain"/>
    <property type="match status" value="1"/>
</dbReference>
<reference key="1">
    <citation type="journal article" date="1998" name="J. Virol.">
        <title>Phylogenetic analysis of the entire genome of influenza A (H3N2) viruses from Japan: evidence for genetic reassortment of the six internal genes.</title>
        <authorList>
            <person name="Lindstrom S.E."/>
            <person name="Hiromoto Y."/>
            <person name="Nerome R."/>
            <person name="Omoe K."/>
            <person name="Sugita S."/>
            <person name="Yamazaki Y."/>
            <person name="Takahashi T."/>
            <person name="Nerome K."/>
        </authorList>
    </citation>
    <scope>NUCLEOTIDE SEQUENCE [GENOMIC RNA]</scope>
</reference>
<protein>
    <recommendedName>
        <fullName evidence="1">Non-structural protein 1</fullName>
        <shortName evidence="1">NS1</shortName>
    </recommendedName>
    <alternativeName>
        <fullName evidence="1">NS1A</fullName>
    </alternativeName>
</protein>
<comment type="function">
    <text evidence="1">Inhibits post-transcriptional processing of cellular pre-mRNA, by binding and inhibiting two cellular proteins that are required for the 3'-end processing of cellular pre-mRNAs: the 30 kDa cleavage and polyadenylation specificity factor/CPSF4 and the poly(A)-binding protein 2/PABPN1. In turn, unprocessed 3' end pre-mRNAs accumulate in the host nucleus and are no longer exported to the cytoplasm. Cellular protein synthesis is thereby shut off very early after virus infection. Viral protein synthesis is not affected by the inhibition of the cellular 3' end processing machinery because the poly(A) tails of viral mRNAs are produced by the viral polymerase through a stuttering mechanism. Prevents the establishment of the cellular antiviral state by inhibiting TRIM25-mediated RIGI ubiquitination, which normally triggers the antiviral transduction signal that leads to the activation of type I IFN genes by transcription factors IRF3 and IRF7. Also binds poly(A) and U6 snRNA. Inhibits the integrated stress response (ISR) in the infected cell by blocking dsRNA binding by EIF2AK2/PKR and further phosphorylation of EIF2S1/EIF-2ALPHA. Stress granule formation is thus inhibited, which allows protein synthesis and viral replication.</text>
</comment>
<comment type="subunit">
    <text evidence="1">Homodimer. Interacts with host TRIM25 (via coiled coil); this interaction specifically inhibits TRIM25 multimerization and TRIM25-mediated RIGI CARD ubiquitination. Interacts with human EIF2AK2/PKR, CPSF4, IVNS1ABP and PABPN1.</text>
</comment>
<comment type="subcellular location">
    <subcellularLocation>
        <location evidence="1">Host nucleus</location>
    </subcellularLocation>
    <subcellularLocation>
        <location evidence="1">Host cytoplasm</location>
    </subcellularLocation>
    <text evidence="1">In uninfected, transfected cells, NS1 is localized in the nucleus. Only in virus infected cells, the nuclear export signal is unveiled, presumably by a viral protein, and a fraction of NS1 is exported in the cytoplasm.</text>
</comment>
<comment type="alternative products">
    <event type="alternative splicing"/>
    <isoform>
        <id>Q67253-1</id>
        <name>NS1</name>
        <sequence type="displayed"/>
    </isoform>
    <isoform>
        <id>Q67253-2</id>
        <name>NEP</name>
        <name>NS2</name>
        <sequence type="not described"/>
    </isoform>
</comment>
<comment type="domain">
    <text evidence="1">The dsRNA-binding region is required for suppression of RNA silencing.</text>
</comment>
<comment type="PTM">
    <text evidence="1">Upon interferon induction, ISGylated via host HERC5; this results in the impairment of NS1 interaction with RNA targets due to its inability to form homodimers and to interact with host EIF2AK2/PKR.</text>
</comment>
<comment type="similarity">
    <text evidence="1">Belongs to the influenza A viruses NS1 family.</text>
</comment>
<proteinExistence type="inferred from homology"/>
<accession>Q67253</accession>
<organism>
    <name type="scientific">Influenza A virus (strain A/Beijing/352/1989 H3N2)</name>
    <dbReference type="NCBI Taxonomy" id="383597"/>
    <lineage>
        <taxon>Viruses</taxon>
        <taxon>Riboviria</taxon>
        <taxon>Orthornavirae</taxon>
        <taxon>Negarnaviricota</taxon>
        <taxon>Polyploviricotina</taxon>
        <taxon>Insthoviricetes</taxon>
        <taxon>Articulavirales</taxon>
        <taxon>Orthomyxoviridae</taxon>
        <taxon>Alphainfluenzavirus</taxon>
        <taxon>Alphainfluenzavirus influenzae</taxon>
        <taxon>Influenza A virus</taxon>
    </lineage>
</organism>
<sequence>MDSNTVSSFQVDCFLWHIRKQVVDQELSDAPFLDRLRRDQRSLRGRGNTLGLDIKAATHVGKQIVEKILKEESDEALKMTMASTPASRYITDMTIEELSRNWFMLMPKQKVEGPLCIRMDQAIMEKNIMLKANFSVIFDRLETLVLLRAFTEEGAIVGEISPLPSFPGHTIEDVKNAIGVLIGGLEWNDNTVRVSKNLQRFAWGSSNENGGPPLTPKQKRKMARTARSKV</sequence>
<organismHost>
    <name type="scientific">Aves</name>
    <dbReference type="NCBI Taxonomy" id="8782"/>
</organismHost>
<organismHost>
    <name type="scientific">Cetacea</name>
    <name type="common">whales</name>
    <dbReference type="NCBI Taxonomy" id="9721"/>
</organismHost>
<organismHost>
    <name type="scientific">Homo sapiens</name>
    <name type="common">Human</name>
    <dbReference type="NCBI Taxonomy" id="9606"/>
</organismHost>
<organismHost>
    <name type="scientific">Phocidae</name>
    <name type="common">true seals</name>
    <dbReference type="NCBI Taxonomy" id="9709"/>
</organismHost>
<organismHost>
    <name type="scientific">Sus scrofa</name>
    <name type="common">Pig</name>
    <dbReference type="NCBI Taxonomy" id="9823"/>
</organismHost>
<feature type="chain" id="PRO_0000324279" description="Non-structural protein 1">
    <location>
        <begin position="1"/>
        <end position="230"/>
    </location>
</feature>
<feature type="region of interest" description="RNA-binding and homodimerization" evidence="1">
    <location>
        <begin position="1"/>
        <end position="73"/>
    </location>
</feature>
<feature type="region of interest" description="CPSF4-binding" evidence="1">
    <location>
        <begin position="180"/>
        <end position="215"/>
    </location>
</feature>
<feature type="region of interest" description="Disordered" evidence="2">
    <location>
        <begin position="205"/>
        <end position="230"/>
    </location>
</feature>
<feature type="region of interest" description="PABPN1-binding" evidence="1">
    <location>
        <begin position="223"/>
        <end position="230"/>
    </location>
</feature>
<feature type="short sequence motif" description="Nuclear localization signal" evidence="1">
    <location>
        <begin position="34"/>
        <end position="38"/>
    </location>
</feature>
<feature type="short sequence motif" description="Nuclear export signal" evidence="1">
    <location>
        <begin position="137"/>
        <end position="146"/>
    </location>
</feature>
<feature type="compositionally biased region" description="Basic residues" evidence="2">
    <location>
        <begin position="217"/>
        <end position="230"/>
    </location>
</feature>
<gene>
    <name evidence="1" type="primary">NS</name>
</gene>
<evidence type="ECO:0000255" key="1">
    <source>
        <dbReference type="HAMAP-Rule" id="MF_04066"/>
    </source>
</evidence>
<evidence type="ECO:0000256" key="2">
    <source>
        <dbReference type="SAM" id="MobiDB-lite"/>
    </source>
</evidence>
<name>NS1_I89A1</name>